<proteinExistence type="inferred from homology"/>
<protein>
    <recommendedName>
        <fullName evidence="1">DNA-directed RNA polymerase subunit alpha</fullName>
        <shortName evidence="1">PEP</shortName>
        <ecNumber evidence="1">2.7.7.6</ecNumber>
    </recommendedName>
    <alternativeName>
        <fullName evidence="1">Plastid-encoded RNA polymerase subunit alpha</fullName>
        <shortName evidence="1">RNA polymerase subunit alpha</shortName>
    </alternativeName>
</protein>
<reference key="1">
    <citation type="journal article" date="1997" name="Mol. Phylogenet. Evol.">
        <title>Phylogenetic analysis of the Triticeae (Poaceae) based on rpoA sequence data.</title>
        <authorList>
            <person name="Petersen G."/>
            <person name="Seberg O."/>
        </authorList>
    </citation>
    <scope>NUCLEOTIDE SEQUENCE [GENOMIC DNA]</scope>
    <source>
        <tissue>Leaf</tissue>
    </source>
</reference>
<comment type="function">
    <text evidence="1">DNA-dependent RNA polymerase catalyzes the transcription of DNA into RNA using the four ribonucleoside triphosphates as substrates.</text>
</comment>
<comment type="catalytic activity">
    <reaction evidence="1">
        <text>RNA(n) + a ribonucleoside 5'-triphosphate = RNA(n+1) + diphosphate</text>
        <dbReference type="Rhea" id="RHEA:21248"/>
        <dbReference type="Rhea" id="RHEA-COMP:14527"/>
        <dbReference type="Rhea" id="RHEA-COMP:17342"/>
        <dbReference type="ChEBI" id="CHEBI:33019"/>
        <dbReference type="ChEBI" id="CHEBI:61557"/>
        <dbReference type="ChEBI" id="CHEBI:140395"/>
        <dbReference type="EC" id="2.7.7.6"/>
    </reaction>
</comment>
<comment type="subunit">
    <text evidence="1">In plastids the minimal PEP RNA polymerase catalytic core is composed of four subunits: alpha, beta, beta', and beta''. When a (nuclear-encoded) sigma factor is associated with the core the holoenzyme is formed, which can initiate transcription.</text>
</comment>
<comment type="subcellular location">
    <subcellularLocation>
        <location>Plastid</location>
        <location>Chloroplast</location>
    </subcellularLocation>
</comment>
<comment type="domain">
    <text evidence="1">The N-terminal domain is essential for RNAP assembly and basal transcription, whereas the C-terminal domain is involved in interaction with transcriptional regulators and with upstream promoter elements.</text>
</comment>
<comment type="similarity">
    <text evidence="1">Belongs to the RNA polymerase alpha chain family.</text>
</comment>
<geneLocation type="chloroplast"/>
<sequence>MVREEVAGSTQTLQWKCVESRVDSKRLYYGRFILSPLRKGQADTVGIALRRALLGEIEGTCITRAKFGSVPHEYSTIAGIEESVQEILLNLKEIVLRSNLYGVRDASICVKGPRYITAQDIILPPSVEIVDTAQPIANLTEPIDFCIDLQIKRDRGYQTELRKNYQDGSYPIDAVSMPVRNVNYSIFSCGNGNEKHEILFLEIWTNGSLTPKEALYEASRNLIDLFLPFLHAEEEGASFEENKNRFTPPLFTFQKRLTNLKKNKKGIPLNCIFIDQLELTSRTYNCLKRANIHTLLDLLSKTEEDLLRIDSFRMEDRKHIWDTLEKHLPIDLLKNKLSF</sequence>
<accession>Q7GED9</accession>
<dbReference type="EC" id="2.7.7.6" evidence="1"/>
<dbReference type="EMBL" id="Z77742">
    <property type="protein sequence ID" value="CAB01303.1"/>
    <property type="molecule type" value="Genomic_DNA"/>
</dbReference>
<dbReference type="RefSeq" id="YP_009743270.1">
    <property type="nucleotide sequence ID" value="NC_046697.1"/>
</dbReference>
<dbReference type="SMR" id="Q7GED9"/>
<dbReference type="GeneID" id="54105943"/>
<dbReference type="GO" id="GO:0009507">
    <property type="term" value="C:chloroplast"/>
    <property type="evidence" value="ECO:0007669"/>
    <property type="project" value="UniProtKB-SubCell"/>
</dbReference>
<dbReference type="GO" id="GO:0000428">
    <property type="term" value="C:DNA-directed RNA polymerase complex"/>
    <property type="evidence" value="ECO:0007669"/>
    <property type="project" value="UniProtKB-KW"/>
</dbReference>
<dbReference type="GO" id="GO:0005739">
    <property type="term" value="C:mitochondrion"/>
    <property type="evidence" value="ECO:0007669"/>
    <property type="project" value="GOC"/>
</dbReference>
<dbReference type="GO" id="GO:0003677">
    <property type="term" value="F:DNA binding"/>
    <property type="evidence" value="ECO:0007669"/>
    <property type="project" value="UniProtKB-UniRule"/>
</dbReference>
<dbReference type="GO" id="GO:0003899">
    <property type="term" value="F:DNA-directed RNA polymerase activity"/>
    <property type="evidence" value="ECO:0007669"/>
    <property type="project" value="UniProtKB-UniRule"/>
</dbReference>
<dbReference type="GO" id="GO:0046983">
    <property type="term" value="F:protein dimerization activity"/>
    <property type="evidence" value="ECO:0007669"/>
    <property type="project" value="InterPro"/>
</dbReference>
<dbReference type="GO" id="GO:0006351">
    <property type="term" value="P:DNA-templated transcription"/>
    <property type="evidence" value="ECO:0007669"/>
    <property type="project" value="UniProtKB-UniRule"/>
</dbReference>
<dbReference type="CDD" id="cd06928">
    <property type="entry name" value="RNAP_alpha_NTD"/>
    <property type="match status" value="1"/>
</dbReference>
<dbReference type="FunFam" id="2.170.120.12:FF:000001">
    <property type="entry name" value="DNA-directed RNA polymerase subunit alpha"/>
    <property type="match status" value="1"/>
</dbReference>
<dbReference type="Gene3D" id="1.10.150.20">
    <property type="entry name" value="5' to 3' exonuclease, C-terminal subdomain"/>
    <property type="match status" value="1"/>
</dbReference>
<dbReference type="Gene3D" id="2.170.120.12">
    <property type="entry name" value="DNA-directed RNA polymerase, insert domain"/>
    <property type="match status" value="1"/>
</dbReference>
<dbReference type="Gene3D" id="3.30.1360.10">
    <property type="entry name" value="RNA polymerase, RBP11-like subunit"/>
    <property type="match status" value="1"/>
</dbReference>
<dbReference type="HAMAP" id="MF_00059">
    <property type="entry name" value="RNApol_bact_RpoA"/>
    <property type="match status" value="1"/>
</dbReference>
<dbReference type="InterPro" id="IPR011262">
    <property type="entry name" value="DNA-dir_RNA_pol_insert"/>
</dbReference>
<dbReference type="InterPro" id="IPR011263">
    <property type="entry name" value="DNA-dir_RNA_pol_RpoA/D/Rpb3"/>
</dbReference>
<dbReference type="InterPro" id="IPR011773">
    <property type="entry name" value="DNA-dir_RpoA"/>
</dbReference>
<dbReference type="InterPro" id="IPR036603">
    <property type="entry name" value="RBP11-like"/>
</dbReference>
<dbReference type="InterPro" id="IPR011260">
    <property type="entry name" value="RNAP_asu_C"/>
</dbReference>
<dbReference type="InterPro" id="IPR036643">
    <property type="entry name" value="RNApol_insert_sf"/>
</dbReference>
<dbReference type="NCBIfam" id="TIGR02027">
    <property type="entry name" value="rpoA"/>
    <property type="match status" value="1"/>
</dbReference>
<dbReference type="Pfam" id="PF01000">
    <property type="entry name" value="RNA_pol_A_bac"/>
    <property type="match status" value="1"/>
</dbReference>
<dbReference type="Pfam" id="PF03118">
    <property type="entry name" value="RNA_pol_A_CTD"/>
    <property type="match status" value="1"/>
</dbReference>
<dbReference type="Pfam" id="PF01193">
    <property type="entry name" value="RNA_pol_L"/>
    <property type="match status" value="1"/>
</dbReference>
<dbReference type="SMART" id="SM00662">
    <property type="entry name" value="RPOLD"/>
    <property type="match status" value="1"/>
</dbReference>
<dbReference type="SUPFAM" id="SSF47789">
    <property type="entry name" value="C-terminal domain of RNA polymerase alpha subunit"/>
    <property type="match status" value="1"/>
</dbReference>
<dbReference type="SUPFAM" id="SSF56553">
    <property type="entry name" value="Insert subdomain of RNA polymerase alpha subunit"/>
    <property type="match status" value="1"/>
</dbReference>
<dbReference type="SUPFAM" id="SSF55257">
    <property type="entry name" value="RBP11-like subunits of RNA polymerase"/>
    <property type="match status" value="1"/>
</dbReference>
<organism>
    <name type="scientific">Aegilops comosa</name>
    <name type="common">Goatgrass</name>
    <dbReference type="NCBI Taxonomy" id="4485"/>
    <lineage>
        <taxon>Eukaryota</taxon>
        <taxon>Viridiplantae</taxon>
        <taxon>Streptophyta</taxon>
        <taxon>Embryophyta</taxon>
        <taxon>Tracheophyta</taxon>
        <taxon>Spermatophyta</taxon>
        <taxon>Magnoliopsida</taxon>
        <taxon>Liliopsida</taxon>
        <taxon>Poales</taxon>
        <taxon>Poaceae</taxon>
        <taxon>BOP clade</taxon>
        <taxon>Pooideae</taxon>
        <taxon>Triticodae</taxon>
        <taxon>Triticeae</taxon>
        <taxon>Triticinae</taxon>
        <taxon>Aegilops</taxon>
    </lineage>
</organism>
<evidence type="ECO:0000255" key="1">
    <source>
        <dbReference type="HAMAP-Rule" id="MF_00059"/>
    </source>
</evidence>
<gene>
    <name evidence="1" type="primary">rpoA</name>
</gene>
<keyword id="KW-0150">Chloroplast</keyword>
<keyword id="KW-0240">DNA-directed RNA polymerase</keyword>
<keyword id="KW-0548">Nucleotidyltransferase</keyword>
<keyword id="KW-0934">Plastid</keyword>
<keyword id="KW-0804">Transcription</keyword>
<keyword id="KW-0808">Transferase</keyword>
<name>RPOA_AEGCM</name>
<feature type="chain" id="PRO_0000175433" description="DNA-directed RNA polymerase subunit alpha">
    <location>
        <begin position="1"/>
        <end position="339"/>
    </location>
</feature>
<feature type="region of interest" description="Alpha N-terminal domain (alpha-NTD)" evidence="1">
    <location>
        <begin position="1"/>
        <end position="233"/>
    </location>
</feature>
<feature type="region of interest" description="Alpha C-terminal domain (alpha-CTD)" evidence="1">
    <location>
        <begin position="266"/>
        <end position="339"/>
    </location>
</feature>